<comment type="function">
    <text evidence="3">Tautomerase that converts enol-oxaloacetate, a strong inhibitor of succinate dehydrogenase, to the physiological keto form of oxaloacetate (PubMed:38287013). It is thereby required to maximize aerobic respiration efficiency by preventing succinate dehydrogenase inhibition (PubMed:38287013).</text>
</comment>
<comment type="catalytic activity">
    <reaction evidence="3">
        <text>oxaloacetate = enol-oxaloacetate</text>
        <dbReference type="Rhea" id="RHEA:16021"/>
        <dbReference type="ChEBI" id="CHEBI:16452"/>
        <dbReference type="ChEBI" id="CHEBI:17479"/>
        <dbReference type="EC" id="5.3.2.2"/>
    </reaction>
    <physiologicalReaction direction="right-to-left" evidence="3">
        <dbReference type="Rhea" id="RHEA:16023"/>
    </physiologicalReaction>
</comment>
<comment type="cofactor">
    <cofactor evidence="1">
        <name>Mg(2+)</name>
        <dbReference type="ChEBI" id="CHEBI:18420"/>
    </cofactor>
    <cofactor evidence="1">
        <name>Mn(2+)</name>
        <dbReference type="ChEBI" id="CHEBI:29035"/>
    </cofactor>
    <text evidence="1">Requires a divalent metal cation for activity.</text>
</comment>
<comment type="biophysicochemical properties">
    <kinetics>
        <KM evidence="3">20.2 uM for enol-oxaloacetate</KM>
        <Vmax evidence="3">53.5 umol/min/mg enzyme</Vmax>
        <text evidence="3">kcat is 32.7 sec(-1) with enol-oxaloacetate as substrate.</text>
    </kinetics>
</comment>
<comment type="subcellular location">
    <subcellularLocation>
        <location evidence="6">Mitochondrion</location>
    </subcellularLocation>
</comment>
<comment type="similarity">
    <text evidence="5">Belongs to the FAH family.</text>
</comment>
<reference key="1">
    <citation type="journal article" date="2009" name="Genome Biol.">
        <title>A whole-genome assembly of the domestic cow, Bos taurus.</title>
        <authorList>
            <person name="Zimin A.V."/>
            <person name="Delcher A.L."/>
            <person name="Florea L."/>
            <person name="Kelley D.R."/>
            <person name="Schatz M.C."/>
            <person name="Puiu D."/>
            <person name="Hanrahan F."/>
            <person name="Pertea G."/>
            <person name="Van Tassell C.P."/>
            <person name="Sonstegard T.S."/>
            <person name="Marcais G."/>
            <person name="Roberts M."/>
            <person name="Subramanian P."/>
            <person name="Yorke J.A."/>
            <person name="Salzberg S.L."/>
        </authorList>
    </citation>
    <scope>NUCLEOTIDE SEQUENCE [LARGE SCALE GENOMIC DNA]</scope>
    <source>
        <strain>Hereford</strain>
    </source>
</reference>
<reference key="2">
    <citation type="journal article" date="2024" name="Nat. Commun.">
        <title>A universal metabolite repair enzyme removes a strong inhibitor of the TCA cycle.</title>
        <authorList>
            <person name="Zmuda A.J."/>
            <person name="Kang X."/>
            <person name="Wissbroecker K.B."/>
            <person name="Freund Saxhaug K."/>
            <person name="Costa K.C."/>
            <person name="Hegeman A.D."/>
            <person name="Niehaus T.D."/>
        </authorList>
    </citation>
    <scope>FUNCTION</scope>
    <scope>CATALYTIC ACTIVITY</scope>
    <scope>BIOPHYSICOCHEMICAL PROPERTIES</scope>
    <scope>SUBCELLULAR LOCATION</scope>
</reference>
<protein>
    <recommendedName>
        <fullName evidence="5">Oxaloacetate tautomerase FAHD2A, mitochondrial</fullName>
        <ecNumber evidence="3">5.3.2.2</ecNumber>
    </recommendedName>
    <alternativeName>
        <fullName evidence="5">Fumarylacetoacetate hydrolase domain-containing protein 2A</fullName>
    </alternativeName>
    <alternativeName>
        <fullName evidence="4">Oxaloacetate tautomerase 1-A</fullName>
        <shortName evidence="4">OAT1-A</shortName>
    </alternativeName>
</protein>
<proteinExistence type="evidence at protein level"/>
<feature type="transit peptide" description="Mitochondrion" evidence="2">
    <location>
        <begin position="1"/>
        <end position="84"/>
    </location>
</feature>
<feature type="chain" id="PRO_0000460729" description="Oxaloacetate tautomerase FAHD2A, mitochondrial" evidence="2">
    <location>
        <begin position="85"/>
        <end position="314"/>
    </location>
</feature>
<feature type="binding site" evidence="1">
    <location>
        <position position="159"/>
    </location>
    <ligand>
        <name>Mg(2+)</name>
        <dbReference type="ChEBI" id="CHEBI:18420"/>
    </ligand>
</feature>
<feature type="binding site" evidence="1">
    <location>
        <position position="161"/>
    </location>
    <ligand>
        <name>Mg(2+)</name>
        <dbReference type="ChEBI" id="CHEBI:18420"/>
    </ligand>
</feature>
<feature type="binding site" evidence="1">
    <location>
        <position position="190"/>
    </location>
    <ligand>
        <name>Mg(2+)</name>
        <dbReference type="ChEBI" id="CHEBI:18420"/>
    </ligand>
</feature>
<accession>F1MLX0</accession>
<organism>
    <name type="scientific">Bos taurus</name>
    <name type="common">Bovine</name>
    <dbReference type="NCBI Taxonomy" id="9913"/>
    <lineage>
        <taxon>Eukaryota</taxon>
        <taxon>Metazoa</taxon>
        <taxon>Chordata</taxon>
        <taxon>Craniata</taxon>
        <taxon>Vertebrata</taxon>
        <taxon>Euteleostomi</taxon>
        <taxon>Mammalia</taxon>
        <taxon>Eutheria</taxon>
        <taxon>Laurasiatheria</taxon>
        <taxon>Artiodactyla</taxon>
        <taxon>Ruminantia</taxon>
        <taxon>Pecora</taxon>
        <taxon>Bovidae</taxon>
        <taxon>Bovinae</taxon>
        <taxon>Bos</taxon>
    </lineage>
</organism>
<sequence length="314" mass="34541">MLGSSGRRLLTTVLQAQRWPFQPSRNMRLVQFQAPHLAGPHLGLESGNGGGVIDLNAFEPTLPKTMVEFLEQGEATLSVVRRALATQLPVLPRSEVTFLAPVTRPDKVVCVGMNYADHCREQNVPVPKEPIIFSKFASAIVGPYDNIILPPESQEVDWEVELAVVIGKRGKYIKATDAMAHVAGFTVAHDVSARDWQMGRNGKQWLLGKTFDTFCPLGPALVTKDSVADPHNLKICCRVNGEVMQSSNTNQMVFKTEELITWVSQFVTLYPGDIILTGTPPGVGVFRKPPVFLKKGDEVQCEIEELGVIINKVV</sequence>
<keyword id="KW-0413">Isomerase</keyword>
<keyword id="KW-0460">Magnesium</keyword>
<keyword id="KW-0479">Metal-binding</keyword>
<keyword id="KW-0496">Mitochondrion</keyword>
<keyword id="KW-1185">Reference proteome</keyword>
<keyword id="KW-0809">Transit peptide</keyword>
<gene>
    <name evidence="4" type="primary">FAHD2A</name>
</gene>
<evidence type="ECO:0000250" key="1">
    <source>
        <dbReference type="UniProtKB" id="Q6P587"/>
    </source>
</evidence>
<evidence type="ECO:0000255" key="2"/>
<evidence type="ECO:0000269" key="3">
    <source>
    </source>
</evidence>
<evidence type="ECO:0000303" key="4">
    <source>
    </source>
</evidence>
<evidence type="ECO:0000305" key="5"/>
<evidence type="ECO:0000305" key="6">
    <source>
    </source>
</evidence>
<dbReference type="EC" id="5.3.2.2" evidence="3"/>
<dbReference type="RefSeq" id="XP_024854139.1">
    <property type="nucleotide sequence ID" value="XM_024998371.2"/>
</dbReference>
<dbReference type="SMR" id="F1MLX0"/>
<dbReference type="FunCoup" id="F1MLX0">
    <property type="interactions" value="837"/>
</dbReference>
<dbReference type="GeneID" id="404123"/>
<dbReference type="VEuPathDB" id="HostDB:ENSBTAG00000011553"/>
<dbReference type="HOGENOM" id="CLU_028458_3_2_1"/>
<dbReference type="InParanoid" id="F1MLX0"/>
<dbReference type="OrthoDB" id="411064at2759"/>
<dbReference type="TreeFam" id="TF300911"/>
<dbReference type="Proteomes" id="UP000009136">
    <property type="component" value="Chromosome 11"/>
</dbReference>
<dbReference type="Bgee" id="ENSBTAG00000011553">
    <property type="expression patterns" value="Expressed in cortex of kidney and 105 other cell types or tissues"/>
</dbReference>
<dbReference type="GO" id="GO:0005739">
    <property type="term" value="C:mitochondrion"/>
    <property type="evidence" value="ECO:0000304"/>
    <property type="project" value="UniProtKB"/>
</dbReference>
<dbReference type="GO" id="GO:0046872">
    <property type="term" value="F:metal ion binding"/>
    <property type="evidence" value="ECO:0007669"/>
    <property type="project" value="UniProtKB-KW"/>
</dbReference>
<dbReference type="GO" id="GO:0050163">
    <property type="term" value="F:oxaloacetate tautomerase activity"/>
    <property type="evidence" value="ECO:0000314"/>
    <property type="project" value="UniProtKB"/>
</dbReference>
<dbReference type="GO" id="GO:0006107">
    <property type="term" value="P:oxaloacetate metabolic process"/>
    <property type="evidence" value="ECO:0000314"/>
    <property type="project" value="UniProtKB"/>
</dbReference>
<dbReference type="FunFam" id="3.90.850.10:FF:000002">
    <property type="entry name" value="2-hydroxyhepta-2,4-diene-1,7-dioate isomerase"/>
    <property type="match status" value="1"/>
</dbReference>
<dbReference type="Gene3D" id="3.90.850.10">
    <property type="entry name" value="Fumarylacetoacetase-like, C-terminal domain"/>
    <property type="match status" value="1"/>
</dbReference>
<dbReference type="InterPro" id="IPR051121">
    <property type="entry name" value="FAH"/>
</dbReference>
<dbReference type="InterPro" id="IPR011234">
    <property type="entry name" value="Fumarylacetoacetase-like_C"/>
</dbReference>
<dbReference type="InterPro" id="IPR036663">
    <property type="entry name" value="Fumarylacetoacetase_C_sf"/>
</dbReference>
<dbReference type="PANTHER" id="PTHR42796:SF4">
    <property type="entry name" value="FUMARYLACETOACETATE HYDROLASE DOMAIN-CONTAINING PROTEIN 2A"/>
    <property type="match status" value="1"/>
</dbReference>
<dbReference type="PANTHER" id="PTHR42796">
    <property type="entry name" value="FUMARYLACETOACETATE HYDROLASE DOMAIN-CONTAINING PROTEIN 2A-RELATED"/>
    <property type="match status" value="1"/>
</dbReference>
<dbReference type="Pfam" id="PF01557">
    <property type="entry name" value="FAA_hydrolase"/>
    <property type="match status" value="1"/>
</dbReference>
<dbReference type="SUPFAM" id="SSF56529">
    <property type="entry name" value="FAH"/>
    <property type="match status" value="1"/>
</dbReference>
<name>FAH2A_BOVIN</name>